<accession>A6WL74</accession>
<keyword id="KW-1003">Cell membrane</keyword>
<keyword id="KW-0472">Membrane</keyword>
<keyword id="KW-0812">Transmembrane</keyword>
<keyword id="KW-1133">Transmembrane helix</keyword>
<gene>
    <name type="ordered locus">Shew185_1413</name>
</gene>
<reference key="1">
    <citation type="submission" date="2007-07" db="EMBL/GenBank/DDBJ databases">
        <title>Complete sequence of chromosome of Shewanella baltica OS185.</title>
        <authorList>
            <consortium name="US DOE Joint Genome Institute"/>
            <person name="Copeland A."/>
            <person name="Lucas S."/>
            <person name="Lapidus A."/>
            <person name="Barry K."/>
            <person name="Glavina del Rio T."/>
            <person name="Dalin E."/>
            <person name="Tice H."/>
            <person name="Pitluck S."/>
            <person name="Sims D."/>
            <person name="Brettin T."/>
            <person name="Bruce D."/>
            <person name="Detter J.C."/>
            <person name="Han C."/>
            <person name="Schmutz J."/>
            <person name="Larimer F."/>
            <person name="Land M."/>
            <person name="Hauser L."/>
            <person name="Kyrpides N."/>
            <person name="Mikhailova N."/>
            <person name="Brettar I."/>
            <person name="Rodrigues J."/>
            <person name="Konstantinidis K."/>
            <person name="Tiedje J."/>
            <person name="Richardson P."/>
        </authorList>
    </citation>
    <scope>NUCLEOTIDE SEQUENCE [LARGE SCALE GENOMIC DNA]</scope>
    <source>
        <strain>OS185</strain>
    </source>
</reference>
<name>Y1413_SHEB8</name>
<feature type="chain" id="PRO_0000314229" description="UPF0391 membrane protein Shew185_1413">
    <location>
        <begin position="1"/>
        <end position="58"/>
    </location>
</feature>
<feature type="transmembrane region" description="Helical" evidence="1">
    <location>
        <begin position="6"/>
        <end position="26"/>
    </location>
</feature>
<feature type="transmembrane region" description="Helical" evidence="1">
    <location>
        <begin position="28"/>
        <end position="48"/>
    </location>
</feature>
<sequence length="58" mass="6060">MLGWTLVFLVVAVIAGLFGFTGIAGAAAGIAKIIFFLFIVLLVISLLINALKGKSPRL</sequence>
<evidence type="ECO:0000255" key="1">
    <source>
        <dbReference type="HAMAP-Rule" id="MF_01361"/>
    </source>
</evidence>
<organism>
    <name type="scientific">Shewanella baltica (strain OS185)</name>
    <dbReference type="NCBI Taxonomy" id="402882"/>
    <lineage>
        <taxon>Bacteria</taxon>
        <taxon>Pseudomonadati</taxon>
        <taxon>Pseudomonadota</taxon>
        <taxon>Gammaproteobacteria</taxon>
        <taxon>Alteromonadales</taxon>
        <taxon>Shewanellaceae</taxon>
        <taxon>Shewanella</taxon>
    </lineage>
</organism>
<comment type="subcellular location">
    <subcellularLocation>
        <location evidence="1">Cell membrane</location>
        <topology evidence="1">Multi-pass membrane protein</topology>
    </subcellularLocation>
</comment>
<comment type="similarity">
    <text evidence="1">Belongs to the UPF0391 family.</text>
</comment>
<proteinExistence type="inferred from homology"/>
<protein>
    <recommendedName>
        <fullName evidence="1">UPF0391 membrane protein Shew185_1413</fullName>
    </recommendedName>
</protein>
<dbReference type="EMBL" id="CP000753">
    <property type="protein sequence ID" value="ABS07563.1"/>
    <property type="molecule type" value="Genomic_DNA"/>
</dbReference>
<dbReference type="KEGG" id="sbm:Shew185_1413"/>
<dbReference type="HOGENOM" id="CLU_187346_1_0_6"/>
<dbReference type="GO" id="GO:0005886">
    <property type="term" value="C:plasma membrane"/>
    <property type="evidence" value="ECO:0007669"/>
    <property type="project" value="UniProtKB-SubCell"/>
</dbReference>
<dbReference type="HAMAP" id="MF_01361">
    <property type="entry name" value="UPF0391"/>
    <property type="match status" value="1"/>
</dbReference>
<dbReference type="InterPro" id="IPR009760">
    <property type="entry name" value="DUF1328"/>
</dbReference>
<dbReference type="NCBIfam" id="NF010228">
    <property type="entry name" value="PRK13682.1-3"/>
    <property type="match status" value="1"/>
</dbReference>
<dbReference type="NCBIfam" id="NF010229">
    <property type="entry name" value="PRK13682.1-4"/>
    <property type="match status" value="1"/>
</dbReference>
<dbReference type="Pfam" id="PF07043">
    <property type="entry name" value="DUF1328"/>
    <property type="match status" value="1"/>
</dbReference>
<dbReference type="PIRSF" id="PIRSF036466">
    <property type="entry name" value="UCP036466"/>
    <property type="match status" value="1"/>
</dbReference>